<keyword id="KW-0963">Cytoplasm</keyword>
<keyword id="KW-0378">Hydrolase</keyword>
<keyword id="KW-0546">Nucleotide metabolism</keyword>
<accession>Q3MEX6</accession>
<reference key="1">
    <citation type="journal article" date="2014" name="Stand. Genomic Sci.">
        <title>Complete genome sequence of Anabaena variabilis ATCC 29413.</title>
        <authorList>
            <person name="Thiel T."/>
            <person name="Pratte B.S."/>
            <person name="Zhong J."/>
            <person name="Goodwin L."/>
            <person name="Copeland A."/>
            <person name="Lucas S."/>
            <person name="Han C."/>
            <person name="Pitluck S."/>
            <person name="Land M.L."/>
            <person name="Kyrpides N.C."/>
            <person name="Woyke T."/>
        </authorList>
    </citation>
    <scope>NUCLEOTIDE SEQUENCE [LARGE SCALE GENOMIC DNA]</scope>
    <source>
        <strain>ATCC 29413 / PCC 7937</strain>
    </source>
</reference>
<gene>
    <name type="ordered locus">Ava_0836</name>
</gene>
<dbReference type="EC" id="3.6.1.9" evidence="1"/>
<dbReference type="EMBL" id="CP000117">
    <property type="protein sequence ID" value="ABA20460.1"/>
    <property type="molecule type" value="Genomic_DNA"/>
</dbReference>
<dbReference type="SMR" id="Q3MEX6"/>
<dbReference type="STRING" id="240292.Ava_0836"/>
<dbReference type="KEGG" id="ava:Ava_0836"/>
<dbReference type="eggNOG" id="COG0424">
    <property type="taxonomic scope" value="Bacteria"/>
</dbReference>
<dbReference type="HOGENOM" id="CLU_040416_1_2_3"/>
<dbReference type="Proteomes" id="UP000002533">
    <property type="component" value="Chromosome"/>
</dbReference>
<dbReference type="GO" id="GO:0005737">
    <property type="term" value="C:cytoplasm"/>
    <property type="evidence" value="ECO:0007669"/>
    <property type="project" value="UniProtKB-SubCell"/>
</dbReference>
<dbReference type="GO" id="GO:0047429">
    <property type="term" value="F:nucleoside triphosphate diphosphatase activity"/>
    <property type="evidence" value="ECO:0007669"/>
    <property type="project" value="UniProtKB-EC"/>
</dbReference>
<dbReference type="GO" id="GO:0009117">
    <property type="term" value="P:nucleotide metabolic process"/>
    <property type="evidence" value="ECO:0007669"/>
    <property type="project" value="UniProtKB-KW"/>
</dbReference>
<dbReference type="CDD" id="cd00555">
    <property type="entry name" value="Maf"/>
    <property type="match status" value="1"/>
</dbReference>
<dbReference type="Gene3D" id="3.90.950.10">
    <property type="match status" value="1"/>
</dbReference>
<dbReference type="HAMAP" id="MF_00528">
    <property type="entry name" value="Maf"/>
    <property type="match status" value="1"/>
</dbReference>
<dbReference type="InterPro" id="IPR029001">
    <property type="entry name" value="ITPase-like_fam"/>
</dbReference>
<dbReference type="InterPro" id="IPR003697">
    <property type="entry name" value="Maf-like"/>
</dbReference>
<dbReference type="NCBIfam" id="TIGR00172">
    <property type="entry name" value="maf"/>
    <property type="match status" value="1"/>
</dbReference>
<dbReference type="PANTHER" id="PTHR43213">
    <property type="entry name" value="BIFUNCTIONAL DTTP/UTP PYROPHOSPHATASE/METHYLTRANSFERASE PROTEIN-RELATED"/>
    <property type="match status" value="1"/>
</dbReference>
<dbReference type="PANTHER" id="PTHR43213:SF5">
    <property type="entry name" value="BIFUNCTIONAL DTTP_UTP PYROPHOSPHATASE_METHYLTRANSFERASE PROTEIN-RELATED"/>
    <property type="match status" value="1"/>
</dbReference>
<dbReference type="Pfam" id="PF02545">
    <property type="entry name" value="Maf"/>
    <property type="match status" value="1"/>
</dbReference>
<dbReference type="PIRSF" id="PIRSF006305">
    <property type="entry name" value="Maf"/>
    <property type="match status" value="1"/>
</dbReference>
<dbReference type="SUPFAM" id="SSF52972">
    <property type="entry name" value="ITPase-like"/>
    <property type="match status" value="1"/>
</dbReference>
<evidence type="ECO:0000255" key="1">
    <source>
        <dbReference type="HAMAP-Rule" id="MF_00528"/>
    </source>
</evidence>
<name>NTPP_TRIV2</name>
<organism>
    <name type="scientific">Trichormus variabilis (strain ATCC 29413 / PCC 7937)</name>
    <name type="common">Anabaena variabilis</name>
    <dbReference type="NCBI Taxonomy" id="240292"/>
    <lineage>
        <taxon>Bacteria</taxon>
        <taxon>Bacillati</taxon>
        <taxon>Cyanobacteriota</taxon>
        <taxon>Cyanophyceae</taxon>
        <taxon>Nostocales</taxon>
        <taxon>Nostocaceae</taxon>
        <taxon>Trichormus</taxon>
    </lineage>
</organism>
<sequence length="197" mass="21625">MKTTQFILASASPARRRLLQTVGIEPIVSPSDFDESQIEETEPGKLVQILAQCKAETVAPQFPSGLVMGCDSVLAIDGKIHGKPIDADEAIARWQLMRGQVGDLYTGHVLIDNLQNRTLVKCQVTRVYFANISDRTIQAYVATGEPLKCAGAFALEGFGSLFIEKIAGCHSNVIGLSLPLLRQMLEELNYDVTDFWK</sequence>
<proteinExistence type="inferred from homology"/>
<comment type="function">
    <text evidence="1">Nucleoside triphosphate pyrophosphatase. May have a dual role in cell division arrest and in preventing the incorporation of modified nucleotides into cellular nucleic acids.</text>
</comment>
<comment type="catalytic activity">
    <reaction evidence="1">
        <text>a ribonucleoside 5'-triphosphate + H2O = a ribonucleoside 5'-phosphate + diphosphate + H(+)</text>
        <dbReference type="Rhea" id="RHEA:23996"/>
        <dbReference type="ChEBI" id="CHEBI:15377"/>
        <dbReference type="ChEBI" id="CHEBI:15378"/>
        <dbReference type="ChEBI" id="CHEBI:33019"/>
        <dbReference type="ChEBI" id="CHEBI:58043"/>
        <dbReference type="ChEBI" id="CHEBI:61557"/>
        <dbReference type="EC" id="3.6.1.9"/>
    </reaction>
</comment>
<comment type="catalytic activity">
    <reaction evidence="1">
        <text>a 2'-deoxyribonucleoside 5'-triphosphate + H2O = a 2'-deoxyribonucleoside 5'-phosphate + diphosphate + H(+)</text>
        <dbReference type="Rhea" id="RHEA:44644"/>
        <dbReference type="ChEBI" id="CHEBI:15377"/>
        <dbReference type="ChEBI" id="CHEBI:15378"/>
        <dbReference type="ChEBI" id="CHEBI:33019"/>
        <dbReference type="ChEBI" id="CHEBI:61560"/>
        <dbReference type="ChEBI" id="CHEBI:65317"/>
        <dbReference type="EC" id="3.6.1.9"/>
    </reaction>
</comment>
<comment type="cofactor">
    <cofactor evidence="1">
        <name>a divalent metal cation</name>
        <dbReference type="ChEBI" id="CHEBI:60240"/>
    </cofactor>
</comment>
<comment type="subcellular location">
    <subcellularLocation>
        <location evidence="1">Cytoplasm</location>
    </subcellularLocation>
</comment>
<comment type="similarity">
    <text evidence="1">Belongs to the Maf family.</text>
</comment>
<protein>
    <recommendedName>
        <fullName evidence="1">Nucleoside triphosphate pyrophosphatase</fullName>
        <ecNumber evidence="1">3.6.1.9</ecNumber>
    </recommendedName>
    <alternativeName>
        <fullName evidence="1">Nucleotide pyrophosphatase</fullName>
        <shortName evidence="1">Nucleotide PPase</shortName>
    </alternativeName>
</protein>
<feature type="chain" id="PRO_0000267242" description="Nucleoside triphosphate pyrophosphatase">
    <location>
        <begin position="1"/>
        <end position="197"/>
    </location>
</feature>
<feature type="active site" description="Proton acceptor" evidence="1">
    <location>
        <position position="71"/>
    </location>
</feature>